<protein>
    <recommendedName>
        <fullName>Lysylphosphatidylglycerol biosynthesis bifunctional protein LysX</fullName>
    </recommendedName>
    <domain>
        <recommendedName>
            <fullName>Lysine--tRNA ligase</fullName>
            <ecNumber>6.1.1.6</ecNumber>
        </recommendedName>
        <alternativeName>
            <fullName>Lysyl-tRNA synthetase</fullName>
            <shortName>LysRS</shortName>
        </alternativeName>
    </domain>
    <domain>
        <recommendedName>
            <fullName>Phosphatidylglycerol lysyltransferase</fullName>
            <ecNumber>2.3.2.3</ecNumber>
        </recommendedName>
        <alternativeName>
            <fullName>Lysylphosphatidylglycerol synthetase</fullName>
            <shortName>LPG synthetase</shortName>
        </alternativeName>
    </domain>
</protein>
<organism>
    <name type="scientific">Gordonia bronchialis (strain ATCC 25592 / DSM 43247 / BCRC 13721 / JCM 3198 / KCTC 3076 / NBRC 16047 / NCTC 10667)</name>
    <name type="common">Rhodococcus bronchialis</name>
    <dbReference type="NCBI Taxonomy" id="526226"/>
    <lineage>
        <taxon>Bacteria</taxon>
        <taxon>Bacillati</taxon>
        <taxon>Actinomycetota</taxon>
        <taxon>Actinomycetes</taxon>
        <taxon>Mycobacteriales</taxon>
        <taxon>Gordoniaceae</taxon>
        <taxon>Gordonia</taxon>
    </lineage>
</organism>
<proteinExistence type="inferred from homology"/>
<gene>
    <name type="primary">lysX</name>
    <name type="ordered locus">Gbro_0127</name>
</gene>
<comment type="function">
    <text evidence="1">Catalyzes the production of L-lysyl-tRNA(Lys)transfer and the transfer of a lysyl group from L-lysyl-tRNA(Lys) to membrane-bound phosphatidylglycerol (PG), which produces lysylphosphatidylglycerol (LPG), one of the components of the bacterial membrane with a positive net charge. LPG synthesis contributes to the resistance to cationic antimicrobial peptides (CAMPs) and likely protects M.tuberculosis against the CAMPs produced by competiting microorganisms (bacteriocins). In fact, the modification of anionic phosphatidylglycerol with positively charged L-lysine results in repulsion of the peptides (By similarity).</text>
</comment>
<comment type="catalytic activity">
    <reaction>
        <text>tRNA(Lys) + L-lysine + ATP = L-lysyl-tRNA(Lys) + AMP + diphosphate</text>
        <dbReference type="Rhea" id="RHEA:20792"/>
        <dbReference type="Rhea" id="RHEA-COMP:9696"/>
        <dbReference type="Rhea" id="RHEA-COMP:9697"/>
        <dbReference type="ChEBI" id="CHEBI:30616"/>
        <dbReference type="ChEBI" id="CHEBI:32551"/>
        <dbReference type="ChEBI" id="CHEBI:33019"/>
        <dbReference type="ChEBI" id="CHEBI:78442"/>
        <dbReference type="ChEBI" id="CHEBI:78529"/>
        <dbReference type="ChEBI" id="CHEBI:456215"/>
        <dbReference type="EC" id="6.1.1.6"/>
    </reaction>
</comment>
<comment type="catalytic activity">
    <reaction>
        <text>L-lysyl-tRNA(Lys) + a 1,2-diacyl-sn-glycero-3-phospho-(1'-sn-glycerol) = a 1,2-diacyl-sn-glycero-3-phospho-1'-(3'-O-L-lysyl)-sn-glycerol + tRNA(Lys)</text>
        <dbReference type="Rhea" id="RHEA:10668"/>
        <dbReference type="Rhea" id="RHEA-COMP:9696"/>
        <dbReference type="Rhea" id="RHEA-COMP:9697"/>
        <dbReference type="ChEBI" id="CHEBI:64716"/>
        <dbReference type="ChEBI" id="CHEBI:75792"/>
        <dbReference type="ChEBI" id="CHEBI:78442"/>
        <dbReference type="ChEBI" id="CHEBI:78529"/>
        <dbReference type="EC" id="2.3.2.3"/>
    </reaction>
</comment>
<comment type="cofactor">
    <cofactor evidence="1">
        <name>Mg(2+)</name>
        <dbReference type="ChEBI" id="CHEBI:18420"/>
    </cofactor>
    <text evidence="1">Binds 3 Mg(2+) ions per subunit.</text>
</comment>
<comment type="subcellular location">
    <subcellularLocation>
        <location evidence="4">Cell membrane</location>
        <topology evidence="4">Multi-pass membrane protein</topology>
    </subcellularLocation>
</comment>
<comment type="similarity">
    <text evidence="4">In the N-terminal section; belongs to the LPG synthetase family.</text>
</comment>
<comment type="similarity">
    <text evidence="4">In the C-terminal section; belongs to the class-II aminoacyl-tRNA synthetase family.</text>
</comment>
<evidence type="ECO:0000250" key="1"/>
<evidence type="ECO:0000255" key="2"/>
<evidence type="ECO:0000256" key="3">
    <source>
        <dbReference type="SAM" id="MobiDB-lite"/>
    </source>
</evidence>
<evidence type="ECO:0000305" key="4"/>
<keyword id="KW-0030">Aminoacyl-tRNA synthetase</keyword>
<keyword id="KW-0046">Antibiotic resistance</keyword>
<keyword id="KW-0067">ATP-binding</keyword>
<keyword id="KW-1003">Cell membrane</keyword>
<keyword id="KW-0238">DNA-binding</keyword>
<keyword id="KW-0436">Ligase</keyword>
<keyword id="KW-0443">Lipid metabolism</keyword>
<keyword id="KW-0460">Magnesium</keyword>
<keyword id="KW-0472">Membrane</keyword>
<keyword id="KW-0479">Metal-binding</keyword>
<keyword id="KW-0511">Multifunctional enzyme</keyword>
<keyword id="KW-0547">Nucleotide-binding</keyword>
<keyword id="KW-1185">Reference proteome</keyword>
<keyword id="KW-0808">Transferase</keyword>
<keyword id="KW-0812">Transmembrane</keyword>
<keyword id="KW-1133">Transmembrane helix</keyword>
<keyword id="KW-0843">Virulence</keyword>
<name>LYSX_GORB4</name>
<sequence>MALDTPSSDLPVSTDDTAEHQPTPAHRPPSAADRRSVDLLEKIRRPRGFGAGAPKIAGTVVGVLAGIALLSSIFPLFRRLIHYPRDFIDNYIVSLPNTSLAWAFVLALVAIALSSRKRIAWWIATIYLVLFMVSNALLLVDPVATDFGVDTDERIQIWIGLGIDAAALIFLIVTYRQFYTRVRRGALFRALGVLIVGLTAATLVGWGLVWAWPGSLERTERLPYAFNRVVTFGSIDSRTFDGHHTHIVIDSALGLLGALALIAAATVLFRSQRLESLMTSDDEKLIRALITRFNDDDSLAYFSTRRDKAVVFSPDGRAAITYRVEIGVGLAGGDPIGDPESWPDAIAEFLTLCDRYGWHPAAMGSSARGAAAYDAAGFGSLSIGDEAILHTREYTISGPAMKAVRQAVTRTRRAGVTVRIRRHGEVPDDEMPQVIARADAWRDTDEERGFAMALSRLGDRADDDCLLVEAVEHAGTPEEKVIGMLSFVPWGRRGVSLDVMRRDRGSVNGVVETMVTELCRNSEQFGITEISLNFATFRAFFEQGPQIGAGPIMRLGYSVLMFGSRFFQMESLYKSNAKYLPDWQPRFLCFEDNRILPRVGLAAIVTEGFVQLPRFGRKQHYIAGQSSIPAGVDADALIAQLESEEDRTAVEVHRPEQVRVRVAKLDRLIEEGFDPYPPADAPTHTIAEAIAEPEGTQVTIAGRVTKMRDFGKVTFADVHDWSGQIQMLVEASRVIPGTPDFGSDVDLGDLVEARGVIGRSRSGELSVLIDAWRFNGKCLRPLPDKWSGLTDPEARVRQRYVDLAINPRSRELLATRSVVVKALRDFLADRGFMEVETPILQQIHGGANATPFQTHINAYNLDLYLRIAPELYLKRLCVGGVEKVFEIGRNFRNEGVDFSHNPEFTSLEAYAAHSDYLKMLDLTREMIQHAATAAHGEPVIIRVDDEGNEQRVDISGDWPVRTVHEVVSEGAGVEITSDTEVSELRGICDRLEIAYRPDWDAGQIVLELYEHLGEDRTTVPTFYTDFPTSTSPLTRAHRSKPGVAERWDLVAWGVELGTAYTELTDPVEQRKRLTAQSILAADGDPEAMELDEDFLTALEYAMPPTGGLGVGVDRVVMLITGQSIRESLAFPMVKPTDA</sequence>
<accession>D0LB45</accession>
<dbReference type="EC" id="6.1.1.6"/>
<dbReference type="EC" id="2.3.2.3"/>
<dbReference type="EMBL" id="CP001802">
    <property type="protein sequence ID" value="ACY19476.1"/>
    <property type="molecule type" value="Genomic_DNA"/>
</dbReference>
<dbReference type="RefSeq" id="WP_012832068.1">
    <property type="nucleotide sequence ID" value="NC_013441.1"/>
</dbReference>
<dbReference type="SMR" id="D0LB45"/>
<dbReference type="STRING" id="526226.Gbro_0127"/>
<dbReference type="KEGG" id="gbr:Gbro_0127"/>
<dbReference type="eggNOG" id="COG1190">
    <property type="taxonomic scope" value="Bacteria"/>
</dbReference>
<dbReference type="eggNOG" id="COG2898">
    <property type="taxonomic scope" value="Bacteria"/>
</dbReference>
<dbReference type="HOGENOM" id="CLU_008255_2_1_11"/>
<dbReference type="OrthoDB" id="9801152at2"/>
<dbReference type="Proteomes" id="UP000001219">
    <property type="component" value="Chromosome"/>
</dbReference>
<dbReference type="GO" id="GO:0005829">
    <property type="term" value="C:cytosol"/>
    <property type="evidence" value="ECO:0007669"/>
    <property type="project" value="TreeGrafter"/>
</dbReference>
<dbReference type="GO" id="GO:0005886">
    <property type="term" value="C:plasma membrane"/>
    <property type="evidence" value="ECO:0007669"/>
    <property type="project" value="UniProtKB-SubCell"/>
</dbReference>
<dbReference type="GO" id="GO:0005524">
    <property type="term" value="F:ATP binding"/>
    <property type="evidence" value="ECO:0007669"/>
    <property type="project" value="UniProtKB-UniRule"/>
</dbReference>
<dbReference type="GO" id="GO:0003677">
    <property type="term" value="F:DNA binding"/>
    <property type="evidence" value="ECO:0007669"/>
    <property type="project" value="UniProtKB-KW"/>
</dbReference>
<dbReference type="GO" id="GO:0004824">
    <property type="term" value="F:lysine-tRNA ligase activity"/>
    <property type="evidence" value="ECO:0007669"/>
    <property type="project" value="UniProtKB-UniRule"/>
</dbReference>
<dbReference type="GO" id="GO:0000287">
    <property type="term" value="F:magnesium ion binding"/>
    <property type="evidence" value="ECO:0007669"/>
    <property type="project" value="UniProtKB-UniRule"/>
</dbReference>
<dbReference type="GO" id="GO:0050071">
    <property type="term" value="F:phosphatidylglycerol lysyltransferase activity"/>
    <property type="evidence" value="ECO:0007669"/>
    <property type="project" value="UniProtKB-EC"/>
</dbReference>
<dbReference type="GO" id="GO:0000049">
    <property type="term" value="F:tRNA binding"/>
    <property type="evidence" value="ECO:0007669"/>
    <property type="project" value="TreeGrafter"/>
</dbReference>
<dbReference type="GO" id="GO:0006629">
    <property type="term" value="P:lipid metabolic process"/>
    <property type="evidence" value="ECO:0007669"/>
    <property type="project" value="UniProtKB-KW"/>
</dbReference>
<dbReference type="GO" id="GO:0006430">
    <property type="term" value="P:lysyl-tRNA aminoacylation"/>
    <property type="evidence" value="ECO:0007669"/>
    <property type="project" value="UniProtKB-UniRule"/>
</dbReference>
<dbReference type="GO" id="GO:0046677">
    <property type="term" value="P:response to antibiotic"/>
    <property type="evidence" value="ECO:0007669"/>
    <property type="project" value="UniProtKB-KW"/>
</dbReference>
<dbReference type="CDD" id="cd04322">
    <property type="entry name" value="LysRS_N"/>
    <property type="match status" value="1"/>
</dbReference>
<dbReference type="Gene3D" id="3.30.930.10">
    <property type="entry name" value="Bira Bifunctional Protein, Domain 2"/>
    <property type="match status" value="1"/>
</dbReference>
<dbReference type="Gene3D" id="2.40.50.140">
    <property type="entry name" value="Nucleic acid-binding proteins"/>
    <property type="match status" value="1"/>
</dbReference>
<dbReference type="HAMAP" id="MF_00252">
    <property type="entry name" value="Lys_tRNA_synth_class2"/>
    <property type="match status" value="1"/>
</dbReference>
<dbReference type="InterPro" id="IPR004364">
    <property type="entry name" value="Aa-tRNA-synt_II"/>
</dbReference>
<dbReference type="InterPro" id="IPR006195">
    <property type="entry name" value="aa-tRNA-synth_II"/>
</dbReference>
<dbReference type="InterPro" id="IPR045864">
    <property type="entry name" value="aa-tRNA-synth_II/BPL/LPL"/>
</dbReference>
<dbReference type="InterPro" id="IPR024320">
    <property type="entry name" value="LPG_synthase_C"/>
</dbReference>
<dbReference type="InterPro" id="IPR002313">
    <property type="entry name" value="Lys-tRNA-ligase_II"/>
</dbReference>
<dbReference type="InterPro" id="IPR044136">
    <property type="entry name" value="Lys-tRNA-ligase_II_N"/>
</dbReference>
<dbReference type="InterPro" id="IPR018149">
    <property type="entry name" value="Lys-tRNA-synth_II_C"/>
</dbReference>
<dbReference type="InterPro" id="IPR012340">
    <property type="entry name" value="NA-bd_OB-fold"/>
</dbReference>
<dbReference type="InterPro" id="IPR004365">
    <property type="entry name" value="NA-bd_OB_tRNA"/>
</dbReference>
<dbReference type="InterPro" id="IPR031553">
    <property type="entry name" value="tRNA-synt_2_TM"/>
</dbReference>
<dbReference type="NCBIfam" id="TIGR00499">
    <property type="entry name" value="lysS_bact"/>
    <property type="match status" value="1"/>
</dbReference>
<dbReference type="NCBIfam" id="NF001756">
    <property type="entry name" value="PRK00484.1"/>
    <property type="match status" value="1"/>
</dbReference>
<dbReference type="NCBIfam" id="NF002821">
    <property type="entry name" value="PRK02983.1"/>
    <property type="match status" value="1"/>
</dbReference>
<dbReference type="PANTHER" id="PTHR42918:SF15">
    <property type="entry name" value="LYSINE--TRNA LIGASE, CHLOROPLASTIC_MITOCHONDRIAL"/>
    <property type="match status" value="1"/>
</dbReference>
<dbReference type="PANTHER" id="PTHR42918">
    <property type="entry name" value="LYSYL-TRNA SYNTHETASE"/>
    <property type="match status" value="1"/>
</dbReference>
<dbReference type="Pfam" id="PF09924">
    <property type="entry name" value="LPG_synthase_C"/>
    <property type="match status" value="1"/>
</dbReference>
<dbReference type="Pfam" id="PF00152">
    <property type="entry name" value="tRNA-synt_2"/>
    <property type="match status" value="1"/>
</dbReference>
<dbReference type="Pfam" id="PF16995">
    <property type="entry name" value="tRNA-synt_2_TM"/>
    <property type="match status" value="1"/>
</dbReference>
<dbReference type="Pfam" id="PF01336">
    <property type="entry name" value="tRNA_anti-codon"/>
    <property type="match status" value="1"/>
</dbReference>
<dbReference type="PRINTS" id="PR00982">
    <property type="entry name" value="TRNASYNTHLYS"/>
</dbReference>
<dbReference type="SUPFAM" id="SSF55681">
    <property type="entry name" value="Class II aaRS and biotin synthetases"/>
    <property type="match status" value="1"/>
</dbReference>
<dbReference type="SUPFAM" id="SSF50249">
    <property type="entry name" value="Nucleic acid-binding proteins"/>
    <property type="match status" value="1"/>
</dbReference>
<dbReference type="PROSITE" id="PS50862">
    <property type="entry name" value="AA_TRNA_LIGASE_II"/>
    <property type="match status" value="1"/>
</dbReference>
<reference key="1">
    <citation type="submission" date="2009-10" db="EMBL/GenBank/DDBJ databases">
        <title>The complete chromosome of Gordonia bronchialis DSM 43247.</title>
        <authorList>
            <consortium name="US DOE Joint Genome Institute (JGI-PGF)"/>
            <person name="Lucas S."/>
            <person name="Copeland A."/>
            <person name="Lapidus A."/>
            <person name="Glavina del Rio T."/>
            <person name="Dalin E."/>
            <person name="Tice H."/>
            <person name="Bruce D."/>
            <person name="Goodwin L."/>
            <person name="Pitluck S."/>
            <person name="Kyrpides N."/>
            <person name="Mavromatis K."/>
            <person name="Ivanova N."/>
            <person name="Ovchinnikova G."/>
            <person name="Saunders E."/>
            <person name="Brettin T."/>
            <person name="Detter J.C."/>
            <person name="Han C."/>
            <person name="Larimer F."/>
            <person name="Land M."/>
            <person name="Hauser L."/>
            <person name="Markowitz V."/>
            <person name="Cheng J.-F."/>
            <person name="Hugenholtz P."/>
            <person name="Woyke T."/>
            <person name="Wu D."/>
            <person name="Jando M."/>
            <person name="Schneider S."/>
            <person name="Goeker M."/>
            <person name="Klenk H.-P."/>
            <person name="Eisen J.A."/>
        </authorList>
    </citation>
    <scope>NUCLEOTIDE SEQUENCE [LARGE SCALE GENOMIC DNA]</scope>
    <source>
        <strain>ATCC 25592 / DSM 43247 / BCRC 13721 / JCM 3198 / KCTC 3076 / NBRC 16047 / NCTC 10667</strain>
    </source>
</reference>
<feature type="chain" id="PRO_0000394314" description="Lysylphosphatidylglycerol biosynthesis bifunctional protein LysX">
    <location>
        <begin position="1"/>
        <end position="1138"/>
    </location>
</feature>
<feature type="transmembrane region" description="Helical" evidence="2">
    <location>
        <begin position="56"/>
        <end position="76"/>
    </location>
</feature>
<feature type="transmembrane region" description="Helical" evidence="2">
    <location>
        <begin position="92"/>
        <end position="112"/>
    </location>
</feature>
<feature type="transmembrane region" description="Helical" evidence="2">
    <location>
        <begin position="119"/>
        <end position="139"/>
    </location>
</feature>
<feature type="transmembrane region" description="Helical" evidence="2">
    <location>
        <begin position="155"/>
        <end position="175"/>
    </location>
</feature>
<feature type="transmembrane region" description="Helical" evidence="2">
    <location>
        <begin position="190"/>
        <end position="210"/>
    </location>
</feature>
<feature type="transmembrane region" description="Helical" evidence="2">
    <location>
        <begin position="247"/>
        <end position="267"/>
    </location>
</feature>
<feature type="DNA-binding region" description="OB">
    <location>
        <begin position="698"/>
        <end position="772"/>
    </location>
</feature>
<feature type="region of interest" description="Phosphatidylglycerol lysyltransferase">
    <location>
        <begin position="1"/>
        <end position="646"/>
    </location>
</feature>
<feature type="region of interest" description="Disordered" evidence="3">
    <location>
        <begin position="1"/>
        <end position="34"/>
    </location>
</feature>
<feature type="region of interest" description="Lysine--tRNA ligase">
    <location>
        <begin position="647"/>
        <end position="1138"/>
    </location>
</feature>
<feature type="compositionally biased region" description="Polar residues" evidence="3">
    <location>
        <begin position="1"/>
        <end position="15"/>
    </location>
</feature>
<feature type="binding site" evidence="1">
    <location>
        <position position="1048"/>
    </location>
    <ligand>
        <name>Mg(2+)</name>
        <dbReference type="ChEBI" id="CHEBI:18420"/>
        <label>1</label>
    </ligand>
</feature>
<feature type="binding site" evidence="1">
    <location>
        <position position="1055"/>
    </location>
    <ligand>
        <name>Mg(2+)</name>
        <dbReference type="ChEBI" id="CHEBI:18420"/>
        <label>1</label>
    </ligand>
</feature>
<feature type="binding site" evidence="1">
    <location>
        <position position="1055"/>
    </location>
    <ligand>
        <name>Mg(2+)</name>
        <dbReference type="ChEBI" id="CHEBI:18420"/>
        <label>2</label>
    </ligand>
</feature>